<comment type="function">
    <text evidence="3 4">Core component of nucleosome. Nucleosomes wrap and compact DNA into chromatin, limiting DNA accessibility to the cellular machineries which require DNA as a template. Histones thereby play a central role in transcription regulation, DNA repair, DNA replication and chromosomal stability. DNA accessibility is regulated via a complex set of post-translational modifications of histones, also called histone code, and nucleosome remodeling. Required for the T-DNA integration step of plant transformation by Agrobacterium. May play an important role in illegitimate recombination.</text>
</comment>
<comment type="subunit">
    <text evidence="5">The nucleosome is a histone octamer containing two molecules each of H2A, H2B, H3 and H4 assembled in one H3-H4 heterotetramer and two H2A-H2B heterodimers. The octamer wraps approximately 147 bp of DNA. Interacts with VIP1.</text>
</comment>
<comment type="subcellular location">
    <subcellularLocation>
        <location evidence="1">Nucleus</location>
    </subcellularLocation>
    <subcellularLocation>
        <location evidence="1">Chromosome</location>
    </subcellularLocation>
</comment>
<comment type="tissue specificity">
    <text evidence="4 6">Low level of expression, mainly in dividing tissues: floral buds, margins of newly emerging leaves, expanding leaves and the meristematic zone of root tips. Also expressed in many non-dividing cells of the elongation zone of the root.</text>
</comment>
<comment type="induction">
    <text evidence="4">By phytohormones. Transiently by wounding.</text>
</comment>
<comment type="PTM">
    <text>Not ubiquitinated.</text>
</comment>
<comment type="miscellaneous">
    <text>RAT5 is required for Agrobacterium-mediated transformation of root but not of germ-lime tissues.</text>
</comment>
<comment type="similarity">
    <text evidence="7">Belongs to the histone H2A family.</text>
</comment>
<organism>
    <name type="scientific">Arabidopsis thaliana</name>
    <name type="common">Mouse-ear cress</name>
    <dbReference type="NCBI Taxonomy" id="3702"/>
    <lineage>
        <taxon>Eukaryota</taxon>
        <taxon>Viridiplantae</taxon>
        <taxon>Streptophyta</taxon>
        <taxon>Embryophyta</taxon>
        <taxon>Tracheophyta</taxon>
        <taxon>Spermatophyta</taxon>
        <taxon>Magnoliopsida</taxon>
        <taxon>eudicotyledons</taxon>
        <taxon>Gunneridae</taxon>
        <taxon>Pentapetalae</taxon>
        <taxon>rosids</taxon>
        <taxon>malvids</taxon>
        <taxon>Brassicales</taxon>
        <taxon>Brassicaceae</taxon>
        <taxon>Camelineae</taxon>
        <taxon>Arabidopsis</taxon>
    </lineage>
</organism>
<reference key="1">
    <citation type="journal article" date="2000" name="Proc. Natl. Acad. Sci. U.S.A.">
        <title>An Arabidopsis histone H2A mutant is deficient in Agrobacterium T-DNA integration.</title>
        <authorList>
            <person name="Mysore K.S."/>
            <person name="Nam J."/>
            <person name="Gelvin S.B."/>
        </authorList>
    </citation>
    <scope>NUCLEOTIDE SEQUENCE [GENOMIC DNA]</scope>
    <scope>FUNCTION</scope>
    <source>
        <strain>cv. Wassilewskija</strain>
    </source>
</reference>
<reference key="2">
    <citation type="journal article" date="1998" name="DNA Res.">
        <title>Structural analysis of Arabidopsis thaliana chromosome 5. VII. Sequence features of the regions of 1,013,767 bp covered by sixteen physically assigned P1 and TAC clones.</title>
        <authorList>
            <person name="Nakamura Y."/>
            <person name="Sato S."/>
            <person name="Asamizu E."/>
            <person name="Kaneko T."/>
            <person name="Kotani H."/>
            <person name="Miyajima N."/>
            <person name="Tabata S."/>
        </authorList>
    </citation>
    <scope>NUCLEOTIDE SEQUENCE [LARGE SCALE GENOMIC DNA]</scope>
    <source>
        <strain>cv. Columbia</strain>
    </source>
</reference>
<reference key="3">
    <citation type="journal article" date="2017" name="Plant J.">
        <title>Araport11: a complete reannotation of the Arabidopsis thaliana reference genome.</title>
        <authorList>
            <person name="Cheng C.Y."/>
            <person name="Krishnakumar V."/>
            <person name="Chan A.P."/>
            <person name="Thibaud-Nissen F."/>
            <person name="Schobel S."/>
            <person name="Town C.D."/>
        </authorList>
    </citation>
    <scope>GENOME REANNOTATION</scope>
    <source>
        <strain>cv. Columbia</strain>
    </source>
</reference>
<reference key="4">
    <citation type="journal article" date="2003" name="Science">
        <title>Empirical analysis of transcriptional activity in the Arabidopsis genome.</title>
        <authorList>
            <person name="Yamada K."/>
            <person name="Lim J."/>
            <person name="Dale J.M."/>
            <person name="Chen H."/>
            <person name="Shinn P."/>
            <person name="Palm C.J."/>
            <person name="Southwick A.M."/>
            <person name="Wu H.C."/>
            <person name="Kim C.J."/>
            <person name="Nguyen M."/>
            <person name="Pham P.K."/>
            <person name="Cheuk R.F."/>
            <person name="Karlin-Newmann G."/>
            <person name="Liu S.X."/>
            <person name="Lam B."/>
            <person name="Sakano H."/>
            <person name="Wu T."/>
            <person name="Yu G."/>
            <person name="Miranda M."/>
            <person name="Quach H.L."/>
            <person name="Tripp M."/>
            <person name="Chang C.H."/>
            <person name="Lee J.M."/>
            <person name="Toriumi M.J."/>
            <person name="Chan M.M."/>
            <person name="Tang C.C."/>
            <person name="Onodera C.S."/>
            <person name="Deng J.M."/>
            <person name="Akiyama K."/>
            <person name="Ansari Y."/>
            <person name="Arakawa T."/>
            <person name="Banh J."/>
            <person name="Banno F."/>
            <person name="Bowser L."/>
            <person name="Brooks S.Y."/>
            <person name="Carninci P."/>
            <person name="Chao Q."/>
            <person name="Choy N."/>
            <person name="Enju A."/>
            <person name="Goldsmith A.D."/>
            <person name="Gurjal M."/>
            <person name="Hansen N.F."/>
            <person name="Hayashizaki Y."/>
            <person name="Johnson-Hopson C."/>
            <person name="Hsuan V.W."/>
            <person name="Iida K."/>
            <person name="Karnes M."/>
            <person name="Khan S."/>
            <person name="Koesema E."/>
            <person name="Ishida J."/>
            <person name="Jiang P.X."/>
            <person name="Jones T."/>
            <person name="Kawai J."/>
            <person name="Kamiya A."/>
            <person name="Meyers C."/>
            <person name="Nakajima M."/>
            <person name="Narusaka M."/>
            <person name="Seki M."/>
            <person name="Sakurai T."/>
            <person name="Satou M."/>
            <person name="Tamse R."/>
            <person name="Vaysberg M."/>
            <person name="Wallender E.K."/>
            <person name="Wong C."/>
            <person name="Yamamura Y."/>
            <person name="Yuan S."/>
            <person name="Shinozaki K."/>
            <person name="Davis R.W."/>
            <person name="Theologis A."/>
            <person name="Ecker J.R."/>
        </authorList>
    </citation>
    <scope>NUCLEOTIDE SEQUENCE [LARGE SCALE MRNA]</scope>
    <source>
        <strain>cv. Columbia</strain>
    </source>
</reference>
<reference key="5">
    <citation type="submission" date="2002-03" db="EMBL/GenBank/DDBJ databases">
        <title>Full-length cDNA from Arabidopsis thaliana.</title>
        <authorList>
            <person name="Brover V.V."/>
            <person name="Troukhan M.E."/>
            <person name="Alexandrov N.A."/>
            <person name="Lu Y.-P."/>
            <person name="Flavell R.B."/>
            <person name="Feldmann K.A."/>
        </authorList>
    </citation>
    <scope>NUCLEOTIDE SEQUENCE [LARGE SCALE MRNA]</scope>
</reference>
<reference key="6">
    <citation type="journal article" date="2002" name="Plant J.">
        <title>Expression of the Arabidopsis histone H2A-1 gene correlates with susceptibility to Agrobacterium transformation.</title>
        <authorList>
            <person name="Yi H."/>
            <person name="Mysore K.S."/>
            <person name="Gelvin S.B."/>
        </authorList>
    </citation>
    <scope>FUNCTION</scope>
    <scope>TISSUE SPECIFICITY</scope>
    <scope>INDUCTION</scope>
</reference>
<reference key="7">
    <citation type="journal article" date="2005" name="Proc. Natl. Acad. Sci. U.S.A.">
        <title>Uncoupling of the functions of the Arabidopsis VIP1 protein in transient and stable plant genetic transformation by Agrobacterium.</title>
        <authorList>
            <person name="Li J."/>
            <person name="Krichevsky A."/>
            <person name="Vaidya M."/>
            <person name="Tzfira T."/>
            <person name="Citovsky V."/>
        </authorList>
    </citation>
    <scope>INTERACTION WITH VIP1</scope>
    <source>
        <strain>cv. Columbia</strain>
    </source>
</reference>
<reference key="8">
    <citation type="journal article" date="2006" name="Plant Cell">
        <title>Constitutive expression exposes functional redundancy between the Arabidopsis histone H2A gene HTA1 and other H2A gene family members.</title>
        <authorList>
            <person name="Yi H."/>
            <person name="Sardesai N."/>
            <person name="Fujinuma T."/>
            <person name="Chan C.-W."/>
            <person name="Veena X."/>
            <person name="Gelvin S.B."/>
        </authorList>
    </citation>
    <scope>TISSUE SPECIFICITY</scope>
    <scope>NOMENCLATURE</scope>
</reference>
<reference key="9">
    <citation type="journal article" date="2007" name="Nature">
        <title>Control of DNA methylation and heterochromatic silencing by histone H2B deubiquitination.</title>
        <authorList>
            <person name="Sridhar V.V."/>
            <person name="Kapoor A."/>
            <person name="Zhang K."/>
            <person name="Zhu J."/>
            <person name="Zhou T."/>
            <person name="Hasegawa P.M."/>
            <person name="Bressan R.A."/>
            <person name="Zhu J.-K."/>
        </authorList>
    </citation>
    <scope>LACK OF UBIQUITINATION</scope>
    <scope>IDENTIFICATION BY MASS SPECTROMETRY</scope>
</reference>
<sequence length="130" mass="13658">MAGRGKTLGSGGAKKATSRSSKAGLQFPVGRIARFLKAGKYAERVGAGAPVYLAAVLEYLAAEVLELAGNAARDNKKTRIVPRHIQLAVRNDEELSKLLGDVTIANGGVMPNIHNLLLPKKAGASKPQED</sequence>
<gene>
    <name type="primary">RAT5</name>
    <name type="synonym">H2A-1</name>
    <name type="ordered locus">At5g54640</name>
    <name type="ORF">MRB17.14</name>
</gene>
<feature type="chain" id="PRO_0000238450" description="Histone H2A.6">
    <location>
        <begin position="1"/>
        <end position="130"/>
    </location>
</feature>
<feature type="region of interest" description="Disordered" evidence="2">
    <location>
        <begin position="1"/>
        <end position="23"/>
    </location>
</feature>
<feature type="compositionally biased region" description="Gly residues" evidence="2">
    <location>
        <begin position="1"/>
        <end position="12"/>
    </location>
</feature>
<feature type="helix" evidence="8">
    <location>
        <begin position="19"/>
        <end position="23"/>
    </location>
</feature>
<feature type="helix" evidence="8">
    <location>
        <begin position="29"/>
        <end position="38"/>
    </location>
</feature>
<feature type="strand" evidence="8">
    <location>
        <begin position="42"/>
        <end position="45"/>
    </location>
</feature>
<feature type="helix" evidence="8">
    <location>
        <begin position="48"/>
        <end position="74"/>
    </location>
</feature>
<feature type="strand" evidence="8">
    <location>
        <begin position="78"/>
        <end position="80"/>
    </location>
</feature>
<feature type="helix" evidence="8">
    <location>
        <begin position="82"/>
        <end position="90"/>
    </location>
</feature>
<feature type="helix" evidence="8">
    <location>
        <begin position="93"/>
        <end position="99"/>
    </location>
</feature>
<keyword id="KW-0002">3D-structure</keyword>
<keyword id="KW-0158">Chromosome</keyword>
<keyword id="KW-0238">DNA-binding</keyword>
<keyword id="KW-0544">Nucleosome core</keyword>
<keyword id="KW-0539">Nucleus</keyword>
<keyword id="KW-1185">Reference proteome</keyword>
<evidence type="ECO:0000250" key="1"/>
<evidence type="ECO:0000256" key="2">
    <source>
        <dbReference type="SAM" id="MobiDB-lite"/>
    </source>
</evidence>
<evidence type="ECO:0000269" key="3">
    <source>
    </source>
</evidence>
<evidence type="ECO:0000269" key="4">
    <source>
    </source>
</evidence>
<evidence type="ECO:0000269" key="5">
    <source>
    </source>
</evidence>
<evidence type="ECO:0000269" key="6">
    <source>
    </source>
</evidence>
<evidence type="ECO:0000305" key="7"/>
<evidence type="ECO:0007829" key="8">
    <source>
        <dbReference type="PDB" id="7BP2"/>
    </source>
</evidence>
<protein>
    <recommendedName>
        <fullName>Histone H2A.6</fullName>
    </recommendedName>
    <alternativeName>
        <fullName>HTA1</fullName>
    </alternativeName>
    <alternativeName>
        <fullName>Protein RESISTANT TO AGROBACTERIUM TRANSFORMATION 5</fullName>
    </alternativeName>
</protein>
<accession>Q9LD28</accession>
<proteinExistence type="evidence at protein level"/>
<dbReference type="EMBL" id="AF204968">
    <property type="protein sequence ID" value="AAF64419.1"/>
    <property type="molecule type" value="Genomic_DNA"/>
</dbReference>
<dbReference type="EMBL" id="AB016879">
    <property type="protein sequence ID" value="BAB09343.1"/>
    <property type="molecule type" value="Genomic_DNA"/>
</dbReference>
<dbReference type="EMBL" id="CP002688">
    <property type="protein sequence ID" value="AED96521.1"/>
    <property type="molecule type" value="Genomic_DNA"/>
</dbReference>
<dbReference type="EMBL" id="AF204967">
    <property type="protein sequence ID" value="AAF64418.1"/>
    <property type="molecule type" value="Genomic_DNA"/>
</dbReference>
<dbReference type="EMBL" id="BT004023">
    <property type="protein sequence ID" value="AAO42059.1"/>
    <property type="molecule type" value="mRNA"/>
</dbReference>
<dbReference type="EMBL" id="BT005189">
    <property type="protein sequence ID" value="AAO50722.1"/>
    <property type="molecule type" value="mRNA"/>
</dbReference>
<dbReference type="EMBL" id="AY088261">
    <property type="protein sequence ID" value="AAM65801.1"/>
    <property type="molecule type" value="mRNA"/>
</dbReference>
<dbReference type="RefSeq" id="NP_200275.1">
    <property type="nucleotide sequence ID" value="NM_124845.4"/>
</dbReference>
<dbReference type="PDB" id="7BP2">
    <property type="method" value="X-ray"/>
    <property type="resolution" value="1.58 A"/>
    <property type="chains" value="A/C=14-106"/>
</dbReference>
<dbReference type="PDB" id="7BP4">
    <property type="method" value="X-ray"/>
    <property type="resolution" value="2.10 A"/>
    <property type="chains" value="A/G=14-106"/>
</dbReference>
<dbReference type="PDB" id="7BP5">
    <property type="method" value="X-ray"/>
    <property type="resolution" value="1.90 A"/>
    <property type="chains" value="A=14-106"/>
</dbReference>
<dbReference type="PDB" id="7BP6">
    <property type="method" value="X-ray"/>
    <property type="resolution" value="1.58 A"/>
    <property type="chains" value="C=14-106"/>
</dbReference>
<dbReference type="PDB" id="7C7X">
    <property type="method" value="X-ray"/>
    <property type="resolution" value="3.00 A"/>
    <property type="chains" value="A/C=14-106"/>
</dbReference>
<dbReference type="PDB" id="8KCB">
    <property type="method" value="EM"/>
    <property type="resolution" value="3.17 A"/>
    <property type="chains" value="A/B=1-130"/>
</dbReference>
<dbReference type="PDB" id="8WH5">
    <property type="method" value="EM"/>
    <property type="resolution" value="3.58 A"/>
    <property type="chains" value="C/G=1-130"/>
</dbReference>
<dbReference type="PDB" id="8WH8">
    <property type="method" value="EM"/>
    <property type="resolution" value="3.60 A"/>
    <property type="chains" value="C/G=1-130"/>
</dbReference>
<dbReference type="PDB" id="8WH9">
    <property type="method" value="EM"/>
    <property type="resolution" value="3.31 A"/>
    <property type="chains" value="C/G=1-130"/>
</dbReference>
<dbReference type="PDB" id="8WHA">
    <property type="method" value="EM"/>
    <property type="resolution" value="4.05 A"/>
    <property type="chains" value="C/G=1-130"/>
</dbReference>
<dbReference type="PDB" id="8WHB">
    <property type="method" value="EM"/>
    <property type="resolution" value="3.17 A"/>
    <property type="chains" value="C/G=1-130"/>
</dbReference>
<dbReference type="PDBsum" id="7BP2"/>
<dbReference type="PDBsum" id="7BP4"/>
<dbReference type="PDBsum" id="7BP5"/>
<dbReference type="PDBsum" id="7BP6"/>
<dbReference type="PDBsum" id="7C7X"/>
<dbReference type="PDBsum" id="8KCB"/>
<dbReference type="PDBsum" id="8WH5"/>
<dbReference type="PDBsum" id="8WH8"/>
<dbReference type="PDBsum" id="8WH9"/>
<dbReference type="PDBsum" id="8WHA"/>
<dbReference type="PDBsum" id="8WHB"/>
<dbReference type="EMDB" id="EMD-37098"/>
<dbReference type="EMDB" id="EMD-37529"/>
<dbReference type="EMDB" id="EMD-37533"/>
<dbReference type="EMDB" id="EMD-37535"/>
<dbReference type="EMDB" id="EMD-37537"/>
<dbReference type="EMDB" id="EMD-37538"/>
<dbReference type="SMR" id="Q9LD28"/>
<dbReference type="BioGRID" id="20797">
    <property type="interactions" value="6"/>
</dbReference>
<dbReference type="FunCoup" id="Q9LD28">
    <property type="interactions" value="2075"/>
</dbReference>
<dbReference type="IntAct" id="Q9LD28">
    <property type="interactions" value="4"/>
</dbReference>
<dbReference type="STRING" id="3702.Q9LD28"/>
<dbReference type="PaxDb" id="3702-AT5G54640.1"/>
<dbReference type="ProteomicsDB" id="230122"/>
<dbReference type="EnsemblPlants" id="AT5G54640.1">
    <property type="protein sequence ID" value="AT5G54640.1"/>
    <property type="gene ID" value="AT5G54640"/>
</dbReference>
<dbReference type="GeneID" id="835553"/>
<dbReference type="Gramene" id="AT5G54640.1">
    <property type="protein sequence ID" value="AT5G54640.1"/>
    <property type="gene ID" value="AT5G54640"/>
</dbReference>
<dbReference type="KEGG" id="ath:AT5G54640"/>
<dbReference type="Araport" id="AT5G54640"/>
<dbReference type="TAIR" id="AT5G54640">
    <property type="gene designation" value="RAT5"/>
</dbReference>
<dbReference type="eggNOG" id="KOG1756">
    <property type="taxonomic scope" value="Eukaryota"/>
</dbReference>
<dbReference type="HOGENOM" id="CLU_062828_3_0_1"/>
<dbReference type="InParanoid" id="Q9LD28"/>
<dbReference type="OMA" id="ANEMFIN"/>
<dbReference type="OrthoDB" id="1105515at2759"/>
<dbReference type="PhylomeDB" id="Q9LD28"/>
<dbReference type="CD-CODE" id="4299E36E">
    <property type="entry name" value="Nucleolus"/>
</dbReference>
<dbReference type="PRO" id="PR:Q9LD28"/>
<dbReference type="Proteomes" id="UP000006548">
    <property type="component" value="Chromosome 5"/>
</dbReference>
<dbReference type="ExpressionAtlas" id="Q9LD28">
    <property type="expression patterns" value="baseline and differential"/>
</dbReference>
<dbReference type="GO" id="GO:0005730">
    <property type="term" value="C:nucleolus"/>
    <property type="evidence" value="ECO:0007005"/>
    <property type="project" value="TAIR"/>
</dbReference>
<dbReference type="GO" id="GO:0000786">
    <property type="term" value="C:nucleosome"/>
    <property type="evidence" value="ECO:0007669"/>
    <property type="project" value="UniProtKB-KW"/>
</dbReference>
<dbReference type="GO" id="GO:0009536">
    <property type="term" value="C:plastid"/>
    <property type="evidence" value="ECO:0007005"/>
    <property type="project" value="TAIR"/>
</dbReference>
<dbReference type="GO" id="GO:0003677">
    <property type="term" value="F:DNA binding"/>
    <property type="evidence" value="ECO:0007669"/>
    <property type="project" value="UniProtKB-KW"/>
</dbReference>
<dbReference type="GO" id="GO:0046982">
    <property type="term" value="F:protein heterodimerization activity"/>
    <property type="evidence" value="ECO:0007669"/>
    <property type="project" value="InterPro"/>
</dbReference>
<dbReference type="GO" id="GO:0030527">
    <property type="term" value="F:structural constituent of chromatin"/>
    <property type="evidence" value="ECO:0007669"/>
    <property type="project" value="InterPro"/>
</dbReference>
<dbReference type="GO" id="GO:0009294">
    <property type="term" value="P:DNA-mediated transformation"/>
    <property type="evidence" value="ECO:0000315"/>
    <property type="project" value="TAIR"/>
</dbReference>
<dbReference type="GO" id="GO:0009617">
    <property type="term" value="P:response to bacterium"/>
    <property type="evidence" value="ECO:0000270"/>
    <property type="project" value="TAIR"/>
</dbReference>
<dbReference type="GO" id="GO:0009611">
    <property type="term" value="P:response to wounding"/>
    <property type="evidence" value="ECO:0000270"/>
    <property type="project" value="TAIR"/>
</dbReference>
<dbReference type="CDD" id="cd00074">
    <property type="entry name" value="HFD_H2A"/>
    <property type="match status" value="1"/>
</dbReference>
<dbReference type="FunFam" id="1.10.20.10:FF:000009">
    <property type="entry name" value="Histone H2A"/>
    <property type="match status" value="1"/>
</dbReference>
<dbReference type="Gene3D" id="1.10.20.10">
    <property type="entry name" value="Histone, subunit A"/>
    <property type="match status" value="1"/>
</dbReference>
<dbReference type="InterPro" id="IPR009072">
    <property type="entry name" value="Histone-fold"/>
</dbReference>
<dbReference type="InterPro" id="IPR002119">
    <property type="entry name" value="Histone_H2A"/>
</dbReference>
<dbReference type="InterPro" id="IPR007125">
    <property type="entry name" value="Histone_H2A/H2B/H3"/>
</dbReference>
<dbReference type="InterPro" id="IPR032454">
    <property type="entry name" value="Histone_H2A_C"/>
</dbReference>
<dbReference type="InterPro" id="IPR032458">
    <property type="entry name" value="Histone_H2A_CS"/>
</dbReference>
<dbReference type="PANTHER" id="PTHR23430">
    <property type="entry name" value="HISTONE H2A"/>
    <property type="match status" value="1"/>
</dbReference>
<dbReference type="Pfam" id="PF00125">
    <property type="entry name" value="Histone"/>
    <property type="match status" value="1"/>
</dbReference>
<dbReference type="Pfam" id="PF16211">
    <property type="entry name" value="Histone_H2A_C"/>
    <property type="match status" value="1"/>
</dbReference>
<dbReference type="PRINTS" id="PR00620">
    <property type="entry name" value="HISTONEH2A"/>
</dbReference>
<dbReference type="SMART" id="SM00414">
    <property type="entry name" value="H2A"/>
    <property type="match status" value="1"/>
</dbReference>
<dbReference type="SUPFAM" id="SSF47113">
    <property type="entry name" value="Histone-fold"/>
    <property type="match status" value="1"/>
</dbReference>
<dbReference type="PROSITE" id="PS00046">
    <property type="entry name" value="HISTONE_H2A"/>
    <property type="match status" value="1"/>
</dbReference>
<name>H2A6_ARATH</name>